<feature type="chain" id="PRO_1000047175" description="2,3,4,5-tetrahydropyridine-2,6-dicarboxylate N-succinyltransferase">
    <location>
        <begin position="1"/>
        <end position="274"/>
    </location>
</feature>
<feature type="binding site" evidence="1">
    <location>
        <position position="107"/>
    </location>
    <ligand>
        <name>substrate</name>
    </ligand>
</feature>
<feature type="binding site" evidence="1">
    <location>
        <position position="144"/>
    </location>
    <ligand>
        <name>substrate</name>
    </ligand>
</feature>
<keyword id="KW-0012">Acyltransferase</keyword>
<keyword id="KW-0028">Amino-acid biosynthesis</keyword>
<keyword id="KW-0963">Cytoplasm</keyword>
<keyword id="KW-0220">Diaminopimelate biosynthesis</keyword>
<keyword id="KW-0457">Lysine biosynthesis</keyword>
<keyword id="KW-1185">Reference proteome</keyword>
<keyword id="KW-0677">Repeat</keyword>
<keyword id="KW-0808">Transferase</keyword>
<evidence type="ECO:0000255" key="1">
    <source>
        <dbReference type="HAMAP-Rule" id="MF_00811"/>
    </source>
</evidence>
<name>DAPD_CERS4</name>
<comment type="catalytic activity">
    <reaction evidence="1">
        <text>(S)-2,3,4,5-tetrahydrodipicolinate + succinyl-CoA + H2O = (S)-2-succinylamino-6-oxoheptanedioate + CoA</text>
        <dbReference type="Rhea" id="RHEA:17325"/>
        <dbReference type="ChEBI" id="CHEBI:15377"/>
        <dbReference type="ChEBI" id="CHEBI:15685"/>
        <dbReference type="ChEBI" id="CHEBI:16845"/>
        <dbReference type="ChEBI" id="CHEBI:57287"/>
        <dbReference type="ChEBI" id="CHEBI:57292"/>
        <dbReference type="EC" id="2.3.1.117"/>
    </reaction>
</comment>
<comment type="pathway">
    <text evidence="1">Amino-acid biosynthesis; L-lysine biosynthesis via DAP pathway; LL-2,6-diaminopimelate from (S)-tetrahydrodipicolinate (succinylase route): step 1/3.</text>
</comment>
<comment type="subunit">
    <text evidence="1">Homotrimer.</text>
</comment>
<comment type="subcellular location">
    <subcellularLocation>
        <location evidence="1">Cytoplasm</location>
    </subcellularLocation>
</comment>
<comment type="similarity">
    <text evidence="1">Belongs to the transferase hexapeptide repeat family.</text>
</comment>
<proteinExistence type="inferred from homology"/>
<sequence length="274" mass="29283">MSYSALEAAIEAAWEARETITPATKGETREAIEATLEALDKGSLRVAEKRGADWHVNQWAKKAVLLGFRLKDMEVQTGGPQAGTWWDKVDSKFAQWGEAQWKAAGFRAVPNCVVRRSAYIARGVVLMPSFVNLGAYVDEGTMVDTWATVGSCAQIGKNVHLSGGVGIGGVLEPMQAGPTIIEDNCFIGARSEVVEGCIVREGSVLGMGVFIGKSTKIVDRETGEVMYGEVPAGSVVVAGSMPSKGGVNLYCAVIVKRVDAQTRSKTSINELLRD</sequence>
<protein>
    <recommendedName>
        <fullName evidence="1">2,3,4,5-tetrahydropyridine-2,6-dicarboxylate N-succinyltransferase</fullName>
        <ecNumber evidence="1">2.3.1.117</ecNumber>
    </recommendedName>
    <alternativeName>
        <fullName evidence="1">Tetrahydrodipicolinate N-succinyltransferase</fullName>
        <shortName evidence="1">THDP succinyltransferase</shortName>
        <shortName evidence="1">THP succinyltransferase</shortName>
        <shortName evidence="1">Tetrahydropicolinate succinylase</shortName>
    </alternativeName>
</protein>
<organism>
    <name type="scientific">Cereibacter sphaeroides (strain ATCC 17023 / DSM 158 / JCM 6121 / CCUG 31486 / LMG 2827 / NBRC 12203 / NCIMB 8253 / ATH 2.4.1.)</name>
    <name type="common">Rhodobacter sphaeroides</name>
    <dbReference type="NCBI Taxonomy" id="272943"/>
    <lineage>
        <taxon>Bacteria</taxon>
        <taxon>Pseudomonadati</taxon>
        <taxon>Pseudomonadota</taxon>
        <taxon>Alphaproteobacteria</taxon>
        <taxon>Rhodobacterales</taxon>
        <taxon>Paracoccaceae</taxon>
        <taxon>Cereibacter</taxon>
    </lineage>
</organism>
<gene>
    <name evidence="1" type="primary">dapD</name>
    <name type="ordered locus">RHOS4_27470</name>
    <name type="ORF">RSP_1131</name>
</gene>
<reference key="1">
    <citation type="submission" date="2005-09" db="EMBL/GenBank/DDBJ databases">
        <title>Complete sequence of chromosome 1 of Rhodobacter sphaeroides 2.4.1.</title>
        <authorList>
            <person name="Copeland A."/>
            <person name="Lucas S."/>
            <person name="Lapidus A."/>
            <person name="Barry K."/>
            <person name="Detter J.C."/>
            <person name="Glavina T."/>
            <person name="Hammon N."/>
            <person name="Israni S."/>
            <person name="Pitluck S."/>
            <person name="Richardson P."/>
            <person name="Mackenzie C."/>
            <person name="Choudhary M."/>
            <person name="Larimer F."/>
            <person name="Hauser L.J."/>
            <person name="Land M."/>
            <person name="Donohue T.J."/>
            <person name="Kaplan S."/>
        </authorList>
    </citation>
    <scope>NUCLEOTIDE SEQUENCE [LARGE SCALE GENOMIC DNA]</scope>
    <source>
        <strain>ATCC 17023 / DSM 158 / JCM 6121 / CCUG 31486 / LMG 2827 / NBRC 12203 / NCIMB 8253 / ATH 2.4.1.</strain>
    </source>
</reference>
<dbReference type="EC" id="2.3.1.117" evidence="1"/>
<dbReference type="EMBL" id="CP000143">
    <property type="protein sequence ID" value="ABA80315.1"/>
    <property type="molecule type" value="Genomic_DNA"/>
</dbReference>
<dbReference type="RefSeq" id="WP_002721542.1">
    <property type="nucleotide sequence ID" value="NZ_CP030271.1"/>
</dbReference>
<dbReference type="RefSeq" id="YP_354216.1">
    <property type="nucleotide sequence ID" value="NC_007493.2"/>
</dbReference>
<dbReference type="SMR" id="Q3IYR9"/>
<dbReference type="STRING" id="272943.RSP_1131"/>
<dbReference type="EnsemblBacteria" id="ABA80315">
    <property type="protein sequence ID" value="ABA80315"/>
    <property type="gene ID" value="RSP_1131"/>
</dbReference>
<dbReference type="GeneID" id="3720829"/>
<dbReference type="KEGG" id="rsp:RSP_1131"/>
<dbReference type="PATRIC" id="fig|272943.9.peg.3109"/>
<dbReference type="eggNOG" id="COG2171">
    <property type="taxonomic scope" value="Bacteria"/>
</dbReference>
<dbReference type="OrthoDB" id="9775362at2"/>
<dbReference type="PhylomeDB" id="Q3IYR9"/>
<dbReference type="UniPathway" id="UPA00034">
    <property type="reaction ID" value="UER00019"/>
</dbReference>
<dbReference type="Proteomes" id="UP000002703">
    <property type="component" value="Chromosome 1"/>
</dbReference>
<dbReference type="GO" id="GO:0005737">
    <property type="term" value="C:cytoplasm"/>
    <property type="evidence" value="ECO:0007669"/>
    <property type="project" value="UniProtKB-SubCell"/>
</dbReference>
<dbReference type="GO" id="GO:0008666">
    <property type="term" value="F:2,3,4,5-tetrahydropyridine-2,6-dicarboxylate N-succinyltransferase activity"/>
    <property type="evidence" value="ECO:0007669"/>
    <property type="project" value="UniProtKB-UniRule"/>
</dbReference>
<dbReference type="GO" id="GO:0016779">
    <property type="term" value="F:nucleotidyltransferase activity"/>
    <property type="evidence" value="ECO:0007669"/>
    <property type="project" value="TreeGrafter"/>
</dbReference>
<dbReference type="GO" id="GO:0019877">
    <property type="term" value="P:diaminopimelate biosynthetic process"/>
    <property type="evidence" value="ECO:0007669"/>
    <property type="project" value="UniProtKB-UniRule"/>
</dbReference>
<dbReference type="GO" id="GO:0009089">
    <property type="term" value="P:lysine biosynthetic process via diaminopimelate"/>
    <property type="evidence" value="ECO:0007669"/>
    <property type="project" value="UniProtKB-UniRule"/>
</dbReference>
<dbReference type="CDD" id="cd03350">
    <property type="entry name" value="LbH_THP_succinylT"/>
    <property type="match status" value="1"/>
</dbReference>
<dbReference type="Gene3D" id="2.160.10.10">
    <property type="entry name" value="Hexapeptide repeat proteins"/>
    <property type="match status" value="1"/>
</dbReference>
<dbReference type="Gene3D" id="1.10.166.10">
    <property type="entry name" value="Tetrahydrodipicolinate-N-succinyltransferase, N-terminal domain"/>
    <property type="match status" value="1"/>
</dbReference>
<dbReference type="HAMAP" id="MF_00811">
    <property type="entry name" value="DapD"/>
    <property type="match status" value="1"/>
</dbReference>
<dbReference type="InterPro" id="IPR005664">
    <property type="entry name" value="DapD_Trfase_Hexpep_rpt_fam"/>
</dbReference>
<dbReference type="InterPro" id="IPR001451">
    <property type="entry name" value="Hexapep"/>
</dbReference>
<dbReference type="InterPro" id="IPR018357">
    <property type="entry name" value="Hexapep_transf_CS"/>
</dbReference>
<dbReference type="InterPro" id="IPR023180">
    <property type="entry name" value="THP_succinylTrfase_dom1"/>
</dbReference>
<dbReference type="InterPro" id="IPR037133">
    <property type="entry name" value="THP_succinylTrfase_N_sf"/>
</dbReference>
<dbReference type="InterPro" id="IPR011004">
    <property type="entry name" value="Trimer_LpxA-like_sf"/>
</dbReference>
<dbReference type="NCBIfam" id="TIGR00965">
    <property type="entry name" value="dapD"/>
    <property type="match status" value="1"/>
</dbReference>
<dbReference type="NCBIfam" id="NF008808">
    <property type="entry name" value="PRK11830.1"/>
    <property type="match status" value="1"/>
</dbReference>
<dbReference type="PANTHER" id="PTHR19136:SF52">
    <property type="entry name" value="2,3,4,5-TETRAHYDROPYRIDINE-2,6-DICARBOXYLATE N-SUCCINYLTRANSFERASE"/>
    <property type="match status" value="1"/>
</dbReference>
<dbReference type="PANTHER" id="PTHR19136">
    <property type="entry name" value="MOLYBDENUM COFACTOR GUANYLYLTRANSFERASE"/>
    <property type="match status" value="1"/>
</dbReference>
<dbReference type="Pfam" id="PF14602">
    <property type="entry name" value="Hexapep_2"/>
    <property type="match status" value="1"/>
</dbReference>
<dbReference type="Pfam" id="PF14805">
    <property type="entry name" value="THDPS_N_2"/>
    <property type="match status" value="1"/>
</dbReference>
<dbReference type="SUPFAM" id="SSF51161">
    <property type="entry name" value="Trimeric LpxA-like enzymes"/>
    <property type="match status" value="1"/>
</dbReference>
<dbReference type="PROSITE" id="PS00101">
    <property type="entry name" value="HEXAPEP_TRANSFERASES"/>
    <property type="match status" value="1"/>
</dbReference>
<accession>Q3IYR9</accession>